<organism>
    <name type="scientific">Coxiella burnetii (strain RSA 331 / Henzerling II)</name>
    <dbReference type="NCBI Taxonomy" id="360115"/>
    <lineage>
        <taxon>Bacteria</taxon>
        <taxon>Pseudomonadati</taxon>
        <taxon>Pseudomonadota</taxon>
        <taxon>Gammaproteobacteria</taxon>
        <taxon>Legionellales</taxon>
        <taxon>Coxiellaceae</taxon>
        <taxon>Coxiella</taxon>
    </lineage>
</organism>
<name>UVRC_COXBR</name>
<proteinExistence type="inferred from homology"/>
<dbReference type="EMBL" id="CP000890">
    <property type="protein sequence ID" value="ABX78555.1"/>
    <property type="molecule type" value="Genomic_DNA"/>
</dbReference>
<dbReference type="RefSeq" id="WP_012220543.1">
    <property type="nucleotide sequence ID" value="NC_010117.1"/>
</dbReference>
<dbReference type="SMR" id="A9NDQ6"/>
<dbReference type="KEGG" id="cbs:COXBURSA331_A1334"/>
<dbReference type="HOGENOM" id="CLU_014841_3_0_6"/>
<dbReference type="GO" id="GO:0005737">
    <property type="term" value="C:cytoplasm"/>
    <property type="evidence" value="ECO:0007669"/>
    <property type="project" value="UniProtKB-SubCell"/>
</dbReference>
<dbReference type="GO" id="GO:0009380">
    <property type="term" value="C:excinuclease repair complex"/>
    <property type="evidence" value="ECO:0007669"/>
    <property type="project" value="InterPro"/>
</dbReference>
<dbReference type="GO" id="GO:0003677">
    <property type="term" value="F:DNA binding"/>
    <property type="evidence" value="ECO:0007669"/>
    <property type="project" value="UniProtKB-UniRule"/>
</dbReference>
<dbReference type="GO" id="GO:0009381">
    <property type="term" value="F:excinuclease ABC activity"/>
    <property type="evidence" value="ECO:0007669"/>
    <property type="project" value="UniProtKB-UniRule"/>
</dbReference>
<dbReference type="GO" id="GO:0006289">
    <property type="term" value="P:nucleotide-excision repair"/>
    <property type="evidence" value="ECO:0007669"/>
    <property type="project" value="UniProtKB-UniRule"/>
</dbReference>
<dbReference type="GO" id="GO:0009432">
    <property type="term" value="P:SOS response"/>
    <property type="evidence" value="ECO:0007669"/>
    <property type="project" value="UniProtKB-UniRule"/>
</dbReference>
<dbReference type="CDD" id="cd10434">
    <property type="entry name" value="GIY-YIG_UvrC_Cho"/>
    <property type="match status" value="1"/>
</dbReference>
<dbReference type="FunFam" id="1.10.150.20:FF:000005">
    <property type="entry name" value="UvrABC system protein C"/>
    <property type="match status" value="1"/>
</dbReference>
<dbReference type="FunFam" id="3.30.420.340:FF:000001">
    <property type="entry name" value="UvrABC system protein C"/>
    <property type="match status" value="1"/>
</dbReference>
<dbReference type="FunFam" id="3.40.1440.10:FF:000001">
    <property type="entry name" value="UvrABC system protein C"/>
    <property type="match status" value="1"/>
</dbReference>
<dbReference type="FunFam" id="4.10.860.10:FF:000002">
    <property type="entry name" value="UvrABC system protein C"/>
    <property type="match status" value="1"/>
</dbReference>
<dbReference type="Gene3D" id="1.10.150.20">
    <property type="entry name" value="5' to 3' exonuclease, C-terminal subdomain"/>
    <property type="match status" value="1"/>
</dbReference>
<dbReference type="Gene3D" id="3.40.1440.10">
    <property type="entry name" value="GIY-YIG endonuclease"/>
    <property type="match status" value="1"/>
</dbReference>
<dbReference type="Gene3D" id="4.10.860.10">
    <property type="entry name" value="UVR domain"/>
    <property type="match status" value="1"/>
</dbReference>
<dbReference type="Gene3D" id="3.30.420.340">
    <property type="entry name" value="UvrC, RNAse H endonuclease domain"/>
    <property type="match status" value="1"/>
</dbReference>
<dbReference type="HAMAP" id="MF_00203">
    <property type="entry name" value="UvrC"/>
    <property type="match status" value="1"/>
</dbReference>
<dbReference type="InterPro" id="IPR000305">
    <property type="entry name" value="GIY-YIG_endonuc"/>
</dbReference>
<dbReference type="InterPro" id="IPR035901">
    <property type="entry name" value="GIY-YIG_endonuc_sf"/>
</dbReference>
<dbReference type="InterPro" id="IPR047296">
    <property type="entry name" value="GIY-YIG_UvrC_Cho"/>
</dbReference>
<dbReference type="InterPro" id="IPR003583">
    <property type="entry name" value="Hlx-hairpin-Hlx_DNA-bd_motif"/>
</dbReference>
<dbReference type="InterPro" id="IPR010994">
    <property type="entry name" value="RuvA_2-like"/>
</dbReference>
<dbReference type="InterPro" id="IPR001943">
    <property type="entry name" value="UVR_dom"/>
</dbReference>
<dbReference type="InterPro" id="IPR036876">
    <property type="entry name" value="UVR_dom_sf"/>
</dbReference>
<dbReference type="InterPro" id="IPR050066">
    <property type="entry name" value="UvrABC_protein_C"/>
</dbReference>
<dbReference type="InterPro" id="IPR004791">
    <property type="entry name" value="UvrC"/>
</dbReference>
<dbReference type="InterPro" id="IPR001162">
    <property type="entry name" value="UvrC_RNase_H_dom"/>
</dbReference>
<dbReference type="InterPro" id="IPR038476">
    <property type="entry name" value="UvrC_RNase_H_dom_sf"/>
</dbReference>
<dbReference type="NCBIfam" id="NF001824">
    <property type="entry name" value="PRK00558.1-5"/>
    <property type="match status" value="1"/>
</dbReference>
<dbReference type="NCBIfam" id="TIGR00194">
    <property type="entry name" value="uvrC"/>
    <property type="match status" value="1"/>
</dbReference>
<dbReference type="PANTHER" id="PTHR30562:SF1">
    <property type="entry name" value="UVRABC SYSTEM PROTEIN C"/>
    <property type="match status" value="1"/>
</dbReference>
<dbReference type="PANTHER" id="PTHR30562">
    <property type="entry name" value="UVRC/OXIDOREDUCTASE"/>
    <property type="match status" value="1"/>
</dbReference>
<dbReference type="Pfam" id="PF01541">
    <property type="entry name" value="GIY-YIG"/>
    <property type="match status" value="1"/>
</dbReference>
<dbReference type="Pfam" id="PF14520">
    <property type="entry name" value="HHH_5"/>
    <property type="match status" value="1"/>
</dbReference>
<dbReference type="Pfam" id="PF02151">
    <property type="entry name" value="UVR"/>
    <property type="match status" value="1"/>
</dbReference>
<dbReference type="Pfam" id="PF22920">
    <property type="entry name" value="UvrC_RNaseH"/>
    <property type="match status" value="1"/>
</dbReference>
<dbReference type="Pfam" id="PF08459">
    <property type="entry name" value="UvrC_RNaseH_dom"/>
    <property type="match status" value="1"/>
</dbReference>
<dbReference type="SMART" id="SM00465">
    <property type="entry name" value="GIYc"/>
    <property type="match status" value="1"/>
</dbReference>
<dbReference type="SMART" id="SM00278">
    <property type="entry name" value="HhH1"/>
    <property type="match status" value="2"/>
</dbReference>
<dbReference type="SUPFAM" id="SSF46600">
    <property type="entry name" value="C-terminal UvrC-binding domain of UvrB"/>
    <property type="match status" value="1"/>
</dbReference>
<dbReference type="SUPFAM" id="SSF82771">
    <property type="entry name" value="GIY-YIG endonuclease"/>
    <property type="match status" value="1"/>
</dbReference>
<dbReference type="SUPFAM" id="SSF47781">
    <property type="entry name" value="RuvA domain 2-like"/>
    <property type="match status" value="1"/>
</dbReference>
<dbReference type="PROSITE" id="PS50164">
    <property type="entry name" value="GIY_YIG"/>
    <property type="match status" value="1"/>
</dbReference>
<dbReference type="PROSITE" id="PS50151">
    <property type="entry name" value="UVR"/>
    <property type="match status" value="1"/>
</dbReference>
<dbReference type="PROSITE" id="PS50165">
    <property type="entry name" value="UVRC"/>
    <property type="match status" value="1"/>
</dbReference>
<protein>
    <recommendedName>
        <fullName evidence="1">UvrABC system protein C</fullName>
        <shortName evidence="1">Protein UvrC</shortName>
    </recommendedName>
    <alternativeName>
        <fullName evidence="1">Excinuclease ABC subunit C</fullName>
    </alternativeName>
</protein>
<sequence length="609" mass="69035">MTIDNPSAFLKTLPTGSGVYQMQDAQGKVIYVGKARNLQKRVSSYFRRQLDSKTQAMMAQVQSIQTTITRNENEALLLEASFIKQFRPRYNVLLRDDKSYPYLYLATHQKFPRLDFYRGAKKAPGRYFGPYPNAGSVRENLALIQKLFKLRQCSESFFKNRTRPCLQYQIKRCTAPCVGYVNEQEYRRQVEDAILFFEGKNDQVIIKLTERMEVASENLVFEEAAHYRDQIRQLRRLQKQQIITGGKGNIDIIGIAESNGAIGFAILFIRSGRMIGHKPFFPNTPLGTTLQTALVEFIPQYYLSPLRNGDIPERIVTSEPLEDRLWIQRALSSGLNRKLAITDQKRAPYKQWQAMAALNAAQALSQHLAQKNTFALKLEAIQKSLALPNPIARIECFDISHTLGEATVASCVVFGEEGPIKKDYRRFNISGVTPGDDYGALRQALTRRYVRLKEGEGILPDVLLIDGGMGQLRQAAEVLEELQVSGVILTAIAKGPGRKAGLEKLFVWGRREEIHLPADNIAFHLIQQIRDEAHRFAITAHCNRRAKRRVESTLQEIEGIGPKRRQKLLKYFGGLQELQRASIEEIARVPGVSETLAKAIYDACHQHKG</sequence>
<keyword id="KW-0963">Cytoplasm</keyword>
<keyword id="KW-0227">DNA damage</keyword>
<keyword id="KW-0228">DNA excision</keyword>
<keyword id="KW-0234">DNA repair</keyword>
<keyword id="KW-0267">Excision nuclease</keyword>
<keyword id="KW-0742">SOS response</keyword>
<evidence type="ECO:0000255" key="1">
    <source>
        <dbReference type="HAMAP-Rule" id="MF_00203"/>
    </source>
</evidence>
<gene>
    <name evidence="1" type="primary">uvrC</name>
    <name type="ordered locus">COXBURSA331_A1334</name>
</gene>
<feature type="chain" id="PRO_1000077778" description="UvrABC system protein C">
    <location>
        <begin position="1"/>
        <end position="609"/>
    </location>
</feature>
<feature type="domain" description="GIY-YIG" evidence="1">
    <location>
        <begin position="15"/>
        <end position="92"/>
    </location>
</feature>
<feature type="domain" description="UVR" evidence="1">
    <location>
        <begin position="202"/>
        <end position="237"/>
    </location>
</feature>
<accession>A9NDQ6</accession>
<comment type="function">
    <text evidence="1">The UvrABC repair system catalyzes the recognition and processing of DNA lesions. UvrC both incises the 5' and 3' sides of the lesion. The N-terminal half is responsible for the 3' incision and the C-terminal half is responsible for the 5' incision.</text>
</comment>
<comment type="subunit">
    <text evidence="1">Interacts with UvrB in an incision complex.</text>
</comment>
<comment type="subcellular location">
    <subcellularLocation>
        <location evidence="1">Cytoplasm</location>
    </subcellularLocation>
</comment>
<comment type="similarity">
    <text evidence="1">Belongs to the UvrC family.</text>
</comment>
<reference key="1">
    <citation type="submission" date="2007-11" db="EMBL/GenBank/DDBJ databases">
        <title>Genome sequencing of phylogenetically and phenotypically diverse Coxiella burnetii isolates.</title>
        <authorList>
            <person name="Seshadri R."/>
            <person name="Samuel J.E."/>
        </authorList>
    </citation>
    <scope>NUCLEOTIDE SEQUENCE [LARGE SCALE GENOMIC DNA]</scope>
    <source>
        <strain>RSA 331 / Henzerling II</strain>
    </source>
</reference>